<evidence type="ECO:0000250" key="1">
    <source>
        <dbReference type="UniProtKB" id="Q86P48"/>
    </source>
</evidence>
<evidence type="ECO:0000255" key="2">
    <source>
        <dbReference type="PROSITE-ProRule" id="PRU00042"/>
    </source>
</evidence>
<evidence type="ECO:0000256" key="3">
    <source>
        <dbReference type="SAM" id="MobiDB-lite"/>
    </source>
</evidence>
<evidence type="ECO:0000312" key="4">
    <source>
        <dbReference type="EMBL" id="EDY72498.1"/>
    </source>
</evidence>
<proteinExistence type="inferred from homology"/>
<name>ATBP_DROPS</name>
<comment type="function">
    <text evidence="1">May be a transcription factor for genes having (A+T) stretches in their promoter and/or enhancer regions. Binds to AT rich DNA (By similarity).</text>
</comment>
<comment type="subcellular location">
    <subcellularLocation>
        <location evidence="1">Nucleus</location>
    </subcellularLocation>
</comment>
<feature type="chain" id="PRO_0000378616" description="AT-rich binding protein">
    <location>
        <begin position="1"/>
        <end position="375"/>
    </location>
</feature>
<feature type="zinc finger region" description="C2H2-type 1" evidence="2">
    <location>
        <begin position="29"/>
        <end position="52"/>
    </location>
</feature>
<feature type="zinc finger region" description="C2H2-type 2" evidence="2">
    <location>
        <begin position="308"/>
        <end position="332"/>
    </location>
</feature>
<feature type="zinc finger region" description="C2H2-type 3" evidence="2">
    <location>
        <begin position="338"/>
        <end position="361"/>
    </location>
</feature>
<feature type="region of interest" description="Disordered" evidence="3">
    <location>
        <begin position="110"/>
        <end position="142"/>
    </location>
</feature>
<feature type="compositionally biased region" description="Basic and acidic residues" evidence="3">
    <location>
        <begin position="110"/>
        <end position="119"/>
    </location>
</feature>
<feature type="compositionally biased region" description="Low complexity" evidence="3">
    <location>
        <begin position="121"/>
        <end position="142"/>
    </location>
</feature>
<gene>
    <name evidence="1" type="primary">ATbp</name>
    <name type="ORF">GA27554</name>
</gene>
<reference evidence="4" key="1">
    <citation type="journal article" date="2005" name="Genome Res.">
        <title>Comparative genome sequencing of Drosophila pseudoobscura: chromosomal, gene, and cis-element evolution.</title>
        <authorList>
            <person name="Richards S."/>
            <person name="Liu Y."/>
            <person name="Bettencourt B.R."/>
            <person name="Hradecky P."/>
            <person name="Letovsky S."/>
            <person name="Nielsen R."/>
            <person name="Thornton K."/>
            <person name="Hubisz M.J."/>
            <person name="Chen R."/>
            <person name="Meisel R.P."/>
            <person name="Couronne O."/>
            <person name="Hua S."/>
            <person name="Smith M.A."/>
            <person name="Zhang P."/>
            <person name="Liu J."/>
            <person name="Bussemaker H.J."/>
            <person name="van Batenburg M.F."/>
            <person name="Howells S.L."/>
            <person name="Scherer S.E."/>
            <person name="Sodergren E."/>
            <person name="Matthews B.B."/>
            <person name="Crosby M.A."/>
            <person name="Schroeder A.J."/>
            <person name="Ortiz-Barrientos D."/>
            <person name="Rives C.M."/>
            <person name="Metzker M.L."/>
            <person name="Muzny D.M."/>
            <person name="Scott G."/>
            <person name="Steffen D."/>
            <person name="Wheeler D.A."/>
            <person name="Worley K.C."/>
            <person name="Havlak P."/>
            <person name="Durbin K.J."/>
            <person name="Egan A."/>
            <person name="Gill R."/>
            <person name="Hume J."/>
            <person name="Morgan M.B."/>
            <person name="Miner G."/>
            <person name="Hamilton C."/>
            <person name="Huang Y."/>
            <person name="Waldron L."/>
            <person name="Verduzco D."/>
            <person name="Clerc-Blankenburg K.P."/>
            <person name="Dubchak I."/>
            <person name="Noor M.A.F."/>
            <person name="Anderson W."/>
            <person name="White K.P."/>
            <person name="Clark A.G."/>
            <person name="Schaeffer S.W."/>
            <person name="Gelbart W.M."/>
            <person name="Weinstock G.M."/>
            <person name="Gibbs R.A."/>
        </authorList>
    </citation>
    <scope>NUCLEOTIDE SEQUENCE [LARGE SCALE GENOMIC DNA]</scope>
    <source>
        <strain>MV2-25 / Tucson 14011-0121.94</strain>
    </source>
</reference>
<dbReference type="EMBL" id="CH379064">
    <property type="protein sequence ID" value="EDY72498.1"/>
    <property type="molecule type" value="Genomic_DNA"/>
</dbReference>
<dbReference type="RefSeq" id="XP_002133871.1">
    <property type="nucleotide sequence ID" value="XM_002133835.2"/>
</dbReference>
<dbReference type="SMR" id="B5DLV1"/>
<dbReference type="FunCoup" id="B5DLV1">
    <property type="interactions" value="26"/>
</dbReference>
<dbReference type="EnsemblMetazoa" id="FBtr0286418">
    <property type="protein sequence ID" value="FBpp0284856"/>
    <property type="gene ID" value="FBgn0248919"/>
</dbReference>
<dbReference type="GeneID" id="6901170"/>
<dbReference type="KEGG" id="dpo:6901170"/>
<dbReference type="CTD" id="5740592"/>
<dbReference type="eggNOG" id="KOG1721">
    <property type="taxonomic scope" value="Eukaryota"/>
</dbReference>
<dbReference type="HOGENOM" id="CLU_712250_0_0_1"/>
<dbReference type="InParanoid" id="B5DLV1"/>
<dbReference type="OMA" id="ERWYICD"/>
<dbReference type="Proteomes" id="UP000001819">
    <property type="component" value="Chromosome X"/>
</dbReference>
<dbReference type="Bgee" id="FBgn0248919">
    <property type="expression patterns" value="Expressed in female reproductive system and 2 other cell types or tissues"/>
</dbReference>
<dbReference type="GO" id="GO:0005634">
    <property type="term" value="C:nucleus"/>
    <property type="evidence" value="ECO:0007669"/>
    <property type="project" value="UniProtKB-SubCell"/>
</dbReference>
<dbReference type="GO" id="GO:0003677">
    <property type="term" value="F:DNA binding"/>
    <property type="evidence" value="ECO:0007669"/>
    <property type="project" value="UniProtKB-KW"/>
</dbReference>
<dbReference type="GO" id="GO:0008270">
    <property type="term" value="F:zinc ion binding"/>
    <property type="evidence" value="ECO:0007669"/>
    <property type="project" value="UniProtKB-KW"/>
</dbReference>
<dbReference type="GO" id="GO:0006357">
    <property type="term" value="P:regulation of transcription by RNA polymerase II"/>
    <property type="evidence" value="ECO:0000250"/>
    <property type="project" value="UniProtKB"/>
</dbReference>
<dbReference type="Gene3D" id="3.30.160.60">
    <property type="entry name" value="Classic Zinc Finger"/>
    <property type="match status" value="2"/>
</dbReference>
<dbReference type="InterPro" id="IPR050331">
    <property type="entry name" value="Zinc_finger"/>
</dbReference>
<dbReference type="InterPro" id="IPR036236">
    <property type="entry name" value="Znf_C2H2_sf"/>
</dbReference>
<dbReference type="InterPro" id="IPR013087">
    <property type="entry name" value="Znf_C2H2_type"/>
</dbReference>
<dbReference type="PANTHER" id="PTHR16515:SF49">
    <property type="entry name" value="GASTRULA ZINC FINGER PROTEIN XLCGF49.1-LIKE-RELATED"/>
    <property type="match status" value="1"/>
</dbReference>
<dbReference type="PANTHER" id="PTHR16515">
    <property type="entry name" value="PR DOMAIN ZINC FINGER PROTEIN"/>
    <property type="match status" value="1"/>
</dbReference>
<dbReference type="SMART" id="SM00355">
    <property type="entry name" value="ZnF_C2H2"/>
    <property type="match status" value="3"/>
</dbReference>
<dbReference type="SUPFAM" id="SSF57667">
    <property type="entry name" value="beta-beta-alpha zinc fingers"/>
    <property type="match status" value="1"/>
</dbReference>
<dbReference type="PROSITE" id="PS00028">
    <property type="entry name" value="ZINC_FINGER_C2H2_1"/>
    <property type="match status" value="3"/>
</dbReference>
<dbReference type="PROSITE" id="PS50157">
    <property type="entry name" value="ZINC_FINGER_C2H2_2"/>
    <property type="match status" value="2"/>
</dbReference>
<sequence>MGFPRILSKNNKIYTKLGEFCLSGDSFWIVCHTCQEELQTQDQFWKHIQDEHNFLHGVAKEHSRTSSYCLTDVEAAAATSGATTSQGAGSVTSVTVPLALYHCSTKYSEDDQREMDIHEAQQQQHQQQQQHQQQQQLQQQQQRDVAKELAELHANAVAVASAAAAAANESSTRSSSGIDIKIEPPCLTLPPEMQAAAAASNATIYHLPQLGPAAVPPPPPTTGFVSANVSTSTTVSTTPPNVTGSHSVMQQQAGVLTGSGLSTLSMSVGPSTAMAAALLSTQELPKDSNSTTASAGSAVSSDDGERWYICDYETCGLKFKYKSRMELHRVVHSKERRFNCELCSASFKQSCNLSTHRKKKHALRGIKSEILPQRF</sequence>
<accession>B5DLV1</accession>
<organism>
    <name type="scientific">Drosophila pseudoobscura pseudoobscura</name>
    <name type="common">Fruit fly</name>
    <dbReference type="NCBI Taxonomy" id="46245"/>
    <lineage>
        <taxon>Eukaryota</taxon>
        <taxon>Metazoa</taxon>
        <taxon>Ecdysozoa</taxon>
        <taxon>Arthropoda</taxon>
        <taxon>Hexapoda</taxon>
        <taxon>Insecta</taxon>
        <taxon>Pterygota</taxon>
        <taxon>Neoptera</taxon>
        <taxon>Endopterygota</taxon>
        <taxon>Diptera</taxon>
        <taxon>Brachycera</taxon>
        <taxon>Muscomorpha</taxon>
        <taxon>Ephydroidea</taxon>
        <taxon>Drosophilidae</taxon>
        <taxon>Drosophila</taxon>
        <taxon>Sophophora</taxon>
    </lineage>
</organism>
<protein>
    <recommendedName>
        <fullName evidence="1">AT-rich binding protein</fullName>
    </recommendedName>
</protein>
<keyword id="KW-0238">DNA-binding</keyword>
<keyword id="KW-0479">Metal-binding</keyword>
<keyword id="KW-0539">Nucleus</keyword>
<keyword id="KW-1185">Reference proteome</keyword>
<keyword id="KW-0677">Repeat</keyword>
<keyword id="KW-0804">Transcription</keyword>
<keyword id="KW-0805">Transcription regulation</keyword>
<keyword id="KW-0862">Zinc</keyword>
<keyword id="KW-0863">Zinc-finger</keyword>